<feature type="chain" id="PRO_0000213716" description="Protein-glutamine gamma-glutamyltransferase Z">
    <location>
        <begin position="1"/>
        <end position="710"/>
    </location>
</feature>
<feature type="active site" evidence="2">
    <location>
        <position position="279"/>
    </location>
</feature>
<feature type="active site" evidence="2">
    <location>
        <position position="338"/>
    </location>
</feature>
<feature type="active site" evidence="2">
    <location>
        <position position="361"/>
    </location>
</feature>
<feature type="binding site" evidence="1">
    <location>
        <position position="401"/>
    </location>
    <ligand>
        <name>Ca(2+)</name>
        <dbReference type="ChEBI" id="CHEBI:29108"/>
    </ligand>
</feature>
<feature type="binding site" evidence="1">
    <location>
        <position position="403"/>
    </location>
    <ligand>
        <name>Ca(2+)</name>
        <dbReference type="ChEBI" id="CHEBI:29108"/>
    </ligand>
</feature>
<feature type="binding site" evidence="1">
    <location>
        <position position="450"/>
    </location>
    <ligand>
        <name>Ca(2+)</name>
        <dbReference type="ChEBI" id="CHEBI:29108"/>
    </ligand>
</feature>
<feature type="binding site" evidence="1">
    <location>
        <position position="455"/>
    </location>
    <ligand>
        <name>Ca(2+)</name>
        <dbReference type="ChEBI" id="CHEBI:29108"/>
    </ligand>
</feature>
<evidence type="ECO:0000250" key="1"/>
<evidence type="ECO:0000255" key="2">
    <source>
        <dbReference type="PROSITE-ProRule" id="PRU10024"/>
    </source>
</evidence>
<evidence type="ECO:0000305" key="3"/>
<organism>
    <name type="scientific">Homo sapiens</name>
    <name type="common">Human</name>
    <dbReference type="NCBI Taxonomy" id="9606"/>
    <lineage>
        <taxon>Eukaryota</taxon>
        <taxon>Metazoa</taxon>
        <taxon>Chordata</taxon>
        <taxon>Craniata</taxon>
        <taxon>Vertebrata</taxon>
        <taxon>Euteleostomi</taxon>
        <taxon>Mammalia</taxon>
        <taxon>Eutheria</taxon>
        <taxon>Euarchontoglires</taxon>
        <taxon>Primates</taxon>
        <taxon>Haplorrhini</taxon>
        <taxon>Catarrhini</taxon>
        <taxon>Hominidae</taxon>
        <taxon>Homo</taxon>
    </lineage>
</organism>
<accession>Q96PF1</accession>
<reference key="1">
    <citation type="journal article" date="2001" name="J. Biol. Chem.">
        <title>Evolution of transglutaminase genes: identification of a transglutaminase gene cluster on human chromosome 15q15. Structure of the gene encoding transglutaminase X and a novel gene family member, transglutaminase Z.</title>
        <authorList>
            <person name="Grenard P."/>
            <person name="Bates M.K."/>
            <person name="Aeschlimann D."/>
        </authorList>
    </citation>
    <scope>NUCLEOTIDE SEQUENCE [MRNA]</scope>
</reference>
<protein>
    <recommendedName>
        <fullName>Protein-glutamine gamma-glutamyltransferase Z</fullName>
    </recommendedName>
    <alternativeName>
        <fullName>Transglutaminase Z</fullName>
        <shortName>TG(Z)</shortName>
        <shortName>TGZ</shortName>
        <shortName>TGase Z</shortName>
        <ecNumber>2.3.2.13</ecNumber>
    </alternativeName>
    <alternativeName>
        <fullName>Transglutaminase-7</fullName>
        <shortName>TGase-7</shortName>
    </alternativeName>
</protein>
<comment type="function">
    <text>Catalyzes the cross-linking of proteins and the conjugation of polyamines to proteins.</text>
</comment>
<comment type="catalytic activity">
    <reaction evidence="2">
        <text>L-glutaminyl-[protein] + L-lysyl-[protein] = [protein]-L-lysyl-N(6)-5-L-glutamyl-[protein] + NH4(+)</text>
        <dbReference type="Rhea" id="RHEA:54816"/>
        <dbReference type="Rhea" id="RHEA-COMP:9752"/>
        <dbReference type="Rhea" id="RHEA-COMP:10207"/>
        <dbReference type="Rhea" id="RHEA-COMP:14005"/>
        <dbReference type="ChEBI" id="CHEBI:28938"/>
        <dbReference type="ChEBI" id="CHEBI:29969"/>
        <dbReference type="ChEBI" id="CHEBI:30011"/>
        <dbReference type="ChEBI" id="CHEBI:138370"/>
        <dbReference type="EC" id="2.3.2.13"/>
    </reaction>
</comment>
<comment type="cofactor">
    <cofactor evidence="1">
        <name>Ca(2+)</name>
        <dbReference type="ChEBI" id="CHEBI:29108"/>
    </cofactor>
    <text evidence="1">Binds 1 Ca(2+) ion per subunit.</text>
</comment>
<comment type="interaction">
    <interactant intactId="EBI-12029034">
        <id>Q96PF1</id>
    </interactant>
    <interactant intactId="EBI-948603">
        <id>Q03989</id>
        <label>ARID5A</label>
    </interactant>
    <organismsDiffer>false</organismsDiffer>
    <experiments>3</experiments>
</comment>
<comment type="interaction">
    <interactant intactId="EBI-12029034">
        <id>Q96PF1</id>
    </interactant>
    <interactant intactId="EBI-725515">
        <id>O43559</id>
        <label>FRS3</label>
    </interactant>
    <organismsDiffer>false</organismsDiffer>
    <experiments>3</experiments>
</comment>
<comment type="interaction">
    <interactant intactId="EBI-12029034">
        <id>Q96PF1</id>
    </interactant>
    <interactant intactId="EBI-744104">
        <id>P55040</id>
        <label>GEM</label>
    </interactant>
    <organismsDiffer>false</organismsDiffer>
    <experiments>3</experiments>
</comment>
<comment type="interaction">
    <interactant intactId="EBI-12029034">
        <id>Q96PF1</id>
    </interactant>
    <interactant intactId="EBI-352986">
        <id>P52597</id>
        <label>HNRNPF</label>
    </interactant>
    <organismsDiffer>false</organismsDiffer>
    <experiments>3</experiments>
</comment>
<comment type="interaction">
    <interactant intactId="EBI-12029034">
        <id>Q96PF1</id>
    </interactant>
    <interactant intactId="EBI-740785">
        <id>P49639</id>
        <label>HOXA1</label>
    </interactant>
    <organismsDiffer>false</organismsDiffer>
    <experiments>3</experiments>
</comment>
<comment type="interaction">
    <interactant intactId="EBI-12029034">
        <id>Q96PF1</id>
    </interactant>
    <interactant intactId="EBI-9027502">
        <id>Q719H9</id>
        <label>KCTD1</label>
    </interactant>
    <organismsDiffer>false</organismsDiffer>
    <experiments>3</experiments>
</comment>
<comment type="interaction">
    <interactant intactId="EBI-12029034">
        <id>Q96PF1</id>
    </interactant>
    <interactant intactId="EBI-11958242">
        <id>Q6A163</id>
        <label>KRT39</label>
    </interactant>
    <organismsDiffer>false</organismsDiffer>
    <experiments>3</experiments>
</comment>
<comment type="interaction">
    <interactant intactId="EBI-12029034">
        <id>Q96PF1</id>
    </interactant>
    <interactant intactId="EBI-1038192">
        <id>Q9UHA4</id>
        <label>LAMTOR3</label>
    </interactant>
    <organismsDiffer>false</organismsDiffer>
    <experiments>3</experiments>
</comment>
<comment type="interaction">
    <interactant intactId="EBI-12029034">
        <id>Q96PF1</id>
    </interactant>
    <interactant intactId="EBI-739832">
        <id>Q8TBB1</id>
        <label>LNX1</label>
    </interactant>
    <organismsDiffer>false</organismsDiffer>
    <experiments>3</experiments>
</comment>
<comment type="interaction">
    <interactant intactId="EBI-12029034">
        <id>Q96PF1</id>
    </interactant>
    <interactant intactId="EBI-724333">
        <id>Q96CD2</id>
        <label>PPCDC</label>
    </interactant>
    <organismsDiffer>false</organismsDiffer>
    <experiments>3</experiments>
</comment>
<comment type="interaction">
    <interactant intactId="EBI-12029034">
        <id>Q96PF1</id>
    </interactant>
    <interactant intactId="EBI-1053424">
        <id>O43741</id>
        <label>PRKAB2</label>
    </interactant>
    <organismsDiffer>false</organismsDiffer>
    <experiments>3</experiments>
</comment>
<comment type="interaction">
    <interactant intactId="EBI-12029034">
        <id>Q96PF1</id>
    </interactant>
    <interactant intactId="EBI-347462">
        <id>P47897</id>
        <label>QARS1</label>
    </interactant>
    <organismsDiffer>false</organismsDiffer>
    <experiments>3</experiments>
</comment>
<comment type="interaction">
    <interactant intactId="EBI-12029034">
        <id>Q96PF1</id>
    </interactant>
    <interactant intactId="EBI-12000762">
        <id>Q7Z5V6-2</id>
        <label>SAXO4</label>
    </interactant>
    <organismsDiffer>false</organismsDiffer>
    <experiments>3</experiments>
</comment>
<comment type="interaction">
    <interactant intactId="EBI-12029034">
        <id>Q96PF1</id>
    </interactant>
    <interactant intactId="EBI-17859611">
        <id>P20132</id>
        <label>SDS</label>
    </interactant>
    <organismsDiffer>false</organismsDiffer>
    <experiments>3</experiments>
</comment>
<comment type="interaction">
    <interactant intactId="EBI-12029034">
        <id>Q96PF1</id>
    </interactant>
    <interactant intactId="EBI-11334239">
        <id>Q8TC71</id>
        <label>SPATA18</label>
    </interactant>
    <organismsDiffer>false</organismsDiffer>
    <experiments>3</experiments>
</comment>
<comment type="interaction">
    <interactant intactId="EBI-12029034">
        <id>Q96PF1</id>
    </interactant>
    <interactant intactId="EBI-3866665">
        <id>O43609</id>
        <label>SPRY1</label>
    </interactant>
    <organismsDiffer>false</organismsDiffer>
    <experiments>3</experiments>
</comment>
<comment type="interaction">
    <interactant intactId="EBI-12029034">
        <id>Q96PF1</id>
    </interactant>
    <interactant intactId="EBI-20753895">
        <id>P22105-1</id>
        <label>TNXB</label>
    </interactant>
    <organismsDiffer>false</organismsDiffer>
    <experiments>3</experiments>
</comment>
<comment type="interaction">
    <interactant intactId="EBI-12029034">
        <id>Q96PF1</id>
    </interactant>
    <interactant intactId="EBI-3918381">
        <id>Q96PN8</id>
        <label>TSSK3</label>
    </interactant>
    <organismsDiffer>false</organismsDiffer>
    <experiments>3</experiments>
</comment>
<comment type="interaction">
    <interactant intactId="EBI-12029034">
        <id>Q96PF1</id>
    </interactant>
    <interactant intactId="EBI-12817837">
        <id>Q9H9P5-5</id>
        <label>UNKL</label>
    </interactant>
    <organismsDiffer>false</organismsDiffer>
    <experiments>3</experiments>
</comment>
<comment type="interaction">
    <interactant intactId="EBI-12029034">
        <id>Q96PF1</id>
    </interactant>
    <interactant intactId="EBI-17234977">
        <id>A0A1U9X8X8</id>
    </interactant>
    <organismsDiffer>false</organismsDiffer>
    <experiments>3</experiments>
</comment>
<comment type="tissue specificity">
    <text>Widely expressed.</text>
</comment>
<comment type="similarity">
    <text evidence="3">Belongs to the transglutaminase superfamily. Transglutaminase family.</text>
</comment>
<name>TGM7_HUMAN</name>
<gene>
    <name type="primary">TGM7</name>
</gene>
<dbReference type="EC" id="2.3.2.13"/>
<dbReference type="EMBL" id="AF363393">
    <property type="protein sequence ID" value="AAK97573.1"/>
    <property type="molecule type" value="mRNA"/>
</dbReference>
<dbReference type="CCDS" id="CCDS32213.1"/>
<dbReference type="RefSeq" id="NP_443187.1">
    <property type="nucleotide sequence ID" value="NM_052955.3"/>
</dbReference>
<dbReference type="SMR" id="Q96PF1"/>
<dbReference type="BioGRID" id="125487">
    <property type="interactions" value="37"/>
</dbReference>
<dbReference type="FunCoup" id="Q96PF1">
    <property type="interactions" value="12"/>
</dbReference>
<dbReference type="IntAct" id="Q96PF1">
    <property type="interactions" value="32"/>
</dbReference>
<dbReference type="STRING" id="9606.ENSP00000389466"/>
<dbReference type="BindingDB" id="Q96PF1"/>
<dbReference type="DrugBank" id="DB00130">
    <property type="generic name" value="L-Glutamine"/>
</dbReference>
<dbReference type="iPTMnet" id="Q96PF1"/>
<dbReference type="PhosphoSitePlus" id="Q96PF1"/>
<dbReference type="BioMuta" id="TGM7"/>
<dbReference type="DMDM" id="20532271"/>
<dbReference type="jPOST" id="Q96PF1"/>
<dbReference type="MassIVE" id="Q96PF1"/>
<dbReference type="PaxDb" id="9606-ENSP00000389466"/>
<dbReference type="PeptideAtlas" id="Q96PF1"/>
<dbReference type="ProteomicsDB" id="77686"/>
<dbReference type="Antibodypedia" id="23856">
    <property type="antibodies" value="129 antibodies from 28 providers"/>
</dbReference>
<dbReference type="DNASU" id="116179"/>
<dbReference type="Ensembl" id="ENST00000452443.3">
    <property type="protein sequence ID" value="ENSP00000389466.2"/>
    <property type="gene ID" value="ENSG00000159495.8"/>
</dbReference>
<dbReference type="GeneID" id="116179"/>
<dbReference type="KEGG" id="hsa:116179"/>
<dbReference type="MANE-Select" id="ENST00000452443.3">
    <property type="protein sequence ID" value="ENSP00000389466.2"/>
    <property type="RefSeq nucleotide sequence ID" value="NM_052955.3"/>
    <property type="RefSeq protein sequence ID" value="NP_443187.1"/>
</dbReference>
<dbReference type="UCSC" id="uc001zrf.2">
    <property type="organism name" value="human"/>
</dbReference>
<dbReference type="AGR" id="HGNC:30790"/>
<dbReference type="CTD" id="116179"/>
<dbReference type="DisGeNET" id="116179"/>
<dbReference type="GeneCards" id="TGM7"/>
<dbReference type="HGNC" id="HGNC:30790">
    <property type="gene designation" value="TGM7"/>
</dbReference>
<dbReference type="HPA" id="ENSG00000159495">
    <property type="expression patterns" value="Tissue enhanced (lymphoid)"/>
</dbReference>
<dbReference type="MIM" id="606776">
    <property type="type" value="gene"/>
</dbReference>
<dbReference type="neXtProt" id="NX_Q96PF1"/>
<dbReference type="OpenTargets" id="ENSG00000159495"/>
<dbReference type="PharmGKB" id="PA134870048"/>
<dbReference type="VEuPathDB" id="HostDB:ENSG00000159495"/>
<dbReference type="eggNOG" id="ENOG502QTRA">
    <property type="taxonomic scope" value="Eukaryota"/>
</dbReference>
<dbReference type="GeneTree" id="ENSGT01050000244866"/>
<dbReference type="HOGENOM" id="CLU_013435_1_0_1"/>
<dbReference type="InParanoid" id="Q96PF1"/>
<dbReference type="OMA" id="TDHITFV"/>
<dbReference type="OrthoDB" id="437511at2759"/>
<dbReference type="PAN-GO" id="Q96PF1">
    <property type="GO annotations" value="2 GO annotations based on evolutionary models"/>
</dbReference>
<dbReference type="PhylomeDB" id="Q96PF1"/>
<dbReference type="TreeFam" id="TF324278"/>
<dbReference type="BRENDA" id="2.3.2.13">
    <property type="organism ID" value="2681"/>
</dbReference>
<dbReference type="PathwayCommons" id="Q96PF1"/>
<dbReference type="SignaLink" id="Q96PF1"/>
<dbReference type="BioGRID-ORCS" id="116179">
    <property type="hits" value="14 hits in 1142 CRISPR screens"/>
</dbReference>
<dbReference type="ChiTaRS" id="TGM7">
    <property type="organism name" value="human"/>
</dbReference>
<dbReference type="GenomeRNAi" id="116179"/>
<dbReference type="Pharos" id="Q96PF1">
    <property type="development level" value="Tdark"/>
</dbReference>
<dbReference type="PRO" id="PR:Q96PF1"/>
<dbReference type="Proteomes" id="UP000005640">
    <property type="component" value="Chromosome 15"/>
</dbReference>
<dbReference type="RNAct" id="Q96PF1">
    <property type="molecule type" value="protein"/>
</dbReference>
<dbReference type="Bgee" id="ENSG00000159495">
    <property type="expression patterns" value="Expressed in secondary oocyte and 44 other cell types or tissues"/>
</dbReference>
<dbReference type="GO" id="GO:0046872">
    <property type="term" value="F:metal ion binding"/>
    <property type="evidence" value="ECO:0007669"/>
    <property type="project" value="UniProtKB-KW"/>
</dbReference>
<dbReference type="GO" id="GO:0003810">
    <property type="term" value="F:protein-glutamine gamma-glutamyltransferase activity"/>
    <property type="evidence" value="ECO:0000318"/>
    <property type="project" value="GO_Central"/>
</dbReference>
<dbReference type="FunFam" id="2.60.40.10:FF:000090">
    <property type="entry name" value="Protein-glutamine gamma-glutamyltransferase 2"/>
    <property type="match status" value="1"/>
</dbReference>
<dbReference type="FunFam" id="2.60.40.10:FF:000278">
    <property type="entry name" value="Protein-glutamine gamma-glutamyltransferase 2"/>
    <property type="match status" value="1"/>
</dbReference>
<dbReference type="FunFam" id="3.90.260.10:FF:000001">
    <property type="entry name" value="Protein-glutamine gamma-glutamyltransferase 2"/>
    <property type="match status" value="1"/>
</dbReference>
<dbReference type="FunFam" id="2.60.40.10:FF:001300">
    <property type="entry name" value="protein-glutamine gamma-glutamyltransferase Z"/>
    <property type="match status" value="1"/>
</dbReference>
<dbReference type="Gene3D" id="2.60.40.10">
    <property type="entry name" value="Immunoglobulins"/>
    <property type="match status" value="3"/>
</dbReference>
<dbReference type="Gene3D" id="3.90.260.10">
    <property type="entry name" value="Transglutaminase-like"/>
    <property type="match status" value="1"/>
</dbReference>
<dbReference type="InterPro" id="IPR013783">
    <property type="entry name" value="Ig-like_fold"/>
</dbReference>
<dbReference type="InterPro" id="IPR014756">
    <property type="entry name" value="Ig_E-set"/>
</dbReference>
<dbReference type="InterPro" id="IPR038765">
    <property type="entry name" value="Papain-like_cys_pep_sf"/>
</dbReference>
<dbReference type="InterPro" id="IPR050779">
    <property type="entry name" value="Transglutaminase"/>
</dbReference>
<dbReference type="InterPro" id="IPR002931">
    <property type="entry name" value="Transglutaminase-like"/>
</dbReference>
<dbReference type="InterPro" id="IPR036985">
    <property type="entry name" value="Transglutaminase-like_sf"/>
</dbReference>
<dbReference type="InterPro" id="IPR023608">
    <property type="entry name" value="Transglutaminase_animal"/>
</dbReference>
<dbReference type="InterPro" id="IPR013808">
    <property type="entry name" value="Transglutaminase_AS"/>
</dbReference>
<dbReference type="InterPro" id="IPR008958">
    <property type="entry name" value="Transglutaminase_C"/>
</dbReference>
<dbReference type="InterPro" id="IPR036238">
    <property type="entry name" value="Transglutaminase_C_sf"/>
</dbReference>
<dbReference type="InterPro" id="IPR001102">
    <property type="entry name" value="Transglutaminase_N"/>
</dbReference>
<dbReference type="PANTHER" id="PTHR11590">
    <property type="entry name" value="PROTEIN-GLUTAMINE GAMMA-GLUTAMYLTRANSFERASE"/>
    <property type="match status" value="1"/>
</dbReference>
<dbReference type="PANTHER" id="PTHR11590:SF41">
    <property type="entry name" value="PROTEIN-GLUTAMINE GAMMA-GLUTAMYLTRANSFERASE Z"/>
    <property type="match status" value="1"/>
</dbReference>
<dbReference type="Pfam" id="PF00927">
    <property type="entry name" value="Transglut_C"/>
    <property type="match status" value="1"/>
</dbReference>
<dbReference type="Pfam" id="PF01841">
    <property type="entry name" value="Transglut_core"/>
    <property type="match status" value="1"/>
</dbReference>
<dbReference type="Pfam" id="PF00868">
    <property type="entry name" value="Transglut_N"/>
    <property type="match status" value="1"/>
</dbReference>
<dbReference type="PIRSF" id="PIRSF000459">
    <property type="entry name" value="TGM_EBP42"/>
    <property type="match status" value="1"/>
</dbReference>
<dbReference type="SMART" id="SM00460">
    <property type="entry name" value="TGc"/>
    <property type="match status" value="1"/>
</dbReference>
<dbReference type="SUPFAM" id="SSF54001">
    <property type="entry name" value="Cysteine proteinases"/>
    <property type="match status" value="1"/>
</dbReference>
<dbReference type="SUPFAM" id="SSF81296">
    <property type="entry name" value="E set domains"/>
    <property type="match status" value="1"/>
</dbReference>
<dbReference type="SUPFAM" id="SSF49309">
    <property type="entry name" value="Transglutaminase, two C-terminal domains"/>
    <property type="match status" value="2"/>
</dbReference>
<dbReference type="PROSITE" id="PS00547">
    <property type="entry name" value="TRANSGLUTAMINASES"/>
    <property type="match status" value="1"/>
</dbReference>
<proteinExistence type="evidence at protein level"/>
<sequence>MDQVATLRLESVDLQSSRNNKEHHTQEMGVKRLTVRRGQPFYLRLSFSRPFQSQNDHITFVAETGPKPSELLGTRATFFLTRVQPGNVWSASDFTIDSNSLQVSLFTPANAVIGHYTLKIEISQGQGHSVTYPLGTFILLFNPWSPEDDVYLPSEILLQEYIMRDYGFVYKGHERFITSWPWNYGQFEEDIIDICFEILNKSLYHLKNPAKDCSQRNDVVYVCRVVSAMINSNDDNGVLQGNWGEDYSKGVSPLEWKGSVAILQQWSARGGQPVKYGQCWVFASVMCTVMRCLGVPTRVVSNFRSAHNVDRNLTIDTYYDRNAEMLSTQKRDKIWNFHVWNECWMIRKDLPPGYNGWQVLDPTPQQTSSGLFCCGPASVKAIREGDVHLAYDTPFVYAEVNADEVIWLLGDGQAQEILAHNTSSIGKEISTKMVGSDQRQSITSSYKYPEGSPEERAVFMKASRKMLGPQRASLPFLDLLESGGLRDQPAQLQLHLARIPEWGQDLQLLLRIQRVPDSTHPRGPIGLVVRFCAQALLHGGGTQKPFWRHTVRMNLDFGKETQWPLLLPYSNYRNKLTDEKLIRVSGIAEVEETGRSMLVLKDICLEPPHLSIEVSERAEVGKALRVHVTLTNTLMVALSSCTMVLEGSGLINGQIAKDLGTLVAGHTLQIQLDLYPTKAGPRQLQVLISSNEVKEIKGYKDIFVTVAGAP</sequence>
<keyword id="KW-0012">Acyltransferase</keyword>
<keyword id="KW-0106">Calcium</keyword>
<keyword id="KW-0479">Metal-binding</keyword>
<keyword id="KW-1267">Proteomics identification</keyword>
<keyword id="KW-1185">Reference proteome</keyword>
<keyword id="KW-0808">Transferase</keyword>